<comment type="function">
    <text evidence="1">Involved in the biosynthesis of branched-chain amino acids (BCAA). Catalyzes an alkyl-migration followed by a ketol-acid reduction of (S)-2-acetolactate (S2AL) to yield (R)-2,3-dihydroxy-isovalerate. In the isomerase reaction, S2AL is rearranged via a Mg-dependent methyl migration to produce 3-hydroxy-3-methyl-2-ketobutyrate (HMKB). In the reductase reaction, this 2-ketoacid undergoes a metal-dependent reduction by NADPH to yield (R)-2,3-dihydroxy-isovalerate.</text>
</comment>
<comment type="catalytic activity">
    <reaction evidence="1">
        <text>(2R)-2,3-dihydroxy-3-methylbutanoate + NADP(+) = (2S)-2-acetolactate + NADPH + H(+)</text>
        <dbReference type="Rhea" id="RHEA:22068"/>
        <dbReference type="ChEBI" id="CHEBI:15378"/>
        <dbReference type="ChEBI" id="CHEBI:49072"/>
        <dbReference type="ChEBI" id="CHEBI:57783"/>
        <dbReference type="ChEBI" id="CHEBI:58349"/>
        <dbReference type="ChEBI" id="CHEBI:58476"/>
        <dbReference type="EC" id="1.1.1.86"/>
    </reaction>
</comment>
<comment type="catalytic activity">
    <reaction evidence="1">
        <text>(2R,3R)-2,3-dihydroxy-3-methylpentanoate + NADP(+) = (S)-2-ethyl-2-hydroxy-3-oxobutanoate + NADPH + H(+)</text>
        <dbReference type="Rhea" id="RHEA:13493"/>
        <dbReference type="ChEBI" id="CHEBI:15378"/>
        <dbReference type="ChEBI" id="CHEBI:49256"/>
        <dbReference type="ChEBI" id="CHEBI:49258"/>
        <dbReference type="ChEBI" id="CHEBI:57783"/>
        <dbReference type="ChEBI" id="CHEBI:58349"/>
        <dbReference type="EC" id="1.1.1.86"/>
    </reaction>
</comment>
<comment type="cofactor">
    <cofactor evidence="1">
        <name>Mg(2+)</name>
        <dbReference type="ChEBI" id="CHEBI:18420"/>
    </cofactor>
    <text evidence="1">Binds 2 magnesium ions per subunit.</text>
</comment>
<comment type="pathway">
    <text evidence="1">Amino-acid biosynthesis; L-isoleucine biosynthesis; L-isoleucine from 2-oxobutanoate: step 2/4.</text>
</comment>
<comment type="pathway">
    <text evidence="1">Amino-acid biosynthesis; L-valine biosynthesis; L-valine from pyruvate: step 2/4.</text>
</comment>
<comment type="similarity">
    <text evidence="1">Belongs to the ketol-acid reductoisomerase family.</text>
</comment>
<keyword id="KW-0028">Amino-acid biosynthesis</keyword>
<keyword id="KW-0100">Branched-chain amino acid biosynthesis</keyword>
<keyword id="KW-0460">Magnesium</keyword>
<keyword id="KW-0479">Metal-binding</keyword>
<keyword id="KW-0521">NADP</keyword>
<keyword id="KW-0560">Oxidoreductase</keyword>
<keyword id="KW-1185">Reference proteome</keyword>
<name>ILVC_STUS1</name>
<protein>
    <recommendedName>
        <fullName evidence="1">Ketol-acid reductoisomerase (NADP(+))</fullName>
        <shortName evidence="1">KARI</shortName>
        <ecNumber evidence="1">1.1.1.86</ecNumber>
    </recommendedName>
    <alternativeName>
        <fullName evidence="1">Acetohydroxy-acid isomeroreductase</fullName>
        <shortName evidence="1">AHIR</shortName>
    </alternativeName>
    <alternativeName>
        <fullName evidence="1">Alpha-keto-beta-hydroxylacyl reductoisomerase</fullName>
    </alternativeName>
    <alternativeName>
        <fullName evidence="1">Ketol-acid reductoisomerase type 1</fullName>
    </alternativeName>
    <alternativeName>
        <fullName evidence="1">Ketol-acid reductoisomerase type I</fullName>
    </alternativeName>
</protein>
<evidence type="ECO:0000255" key="1">
    <source>
        <dbReference type="HAMAP-Rule" id="MF_00435"/>
    </source>
</evidence>
<evidence type="ECO:0000255" key="2">
    <source>
        <dbReference type="PROSITE-ProRule" id="PRU01197"/>
    </source>
</evidence>
<evidence type="ECO:0000255" key="3">
    <source>
        <dbReference type="PROSITE-ProRule" id="PRU01198"/>
    </source>
</evidence>
<sequence>MKVSYDKDCDLSIIQGKKVAIIGYGSQGHAHACNLKDSGVDVTVGLRPGSSSIAKAEAHGLKVSDVPAAVAAADLVMILTPDEFQGRLYKDEVEPNLKQGATLAFAHGFSIHYNQVVPRADLDVIMIAPKAPGHTVRSEFVKGGGIPDLIAIYQDASGNARNVALSYACGVGGGRTGIIETTFKDETETDLFGEQAVLCGGCVELVKAGFETLVEAGYAPEMAYFECLHELKLIVDLMFEGGIANMNYSISNNAEYGEYVTGPEVINAESRAAMRNALKRIQDGEYAKMFITEGAANYPSMTAYRRNNAAHGIEVVGEKLRAMMPWIAANKIVDKSKN</sequence>
<dbReference type="EC" id="1.1.1.86" evidence="1"/>
<dbReference type="EMBL" id="CP000304">
    <property type="protein sequence ID" value="ABP80887.1"/>
    <property type="molecule type" value="Genomic_DNA"/>
</dbReference>
<dbReference type="RefSeq" id="WP_011914321.1">
    <property type="nucleotide sequence ID" value="NC_009434.1"/>
</dbReference>
<dbReference type="SMR" id="A4VPI6"/>
<dbReference type="KEGG" id="psa:PST_3256"/>
<dbReference type="eggNOG" id="COG0059">
    <property type="taxonomic scope" value="Bacteria"/>
</dbReference>
<dbReference type="HOGENOM" id="CLU_033821_0_1_6"/>
<dbReference type="UniPathway" id="UPA00047">
    <property type="reaction ID" value="UER00056"/>
</dbReference>
<dbReference type="UniPathway" id="UPA00049">
    <property type="reaction ID" value="UER00060"/>
</dbReference>
<dbReference type="Proteomes" id="UP000000233">
    <property type="component" value="Chromosome"/>
</dbReference>
<dbReference type="GO" id="GO:0005829">
    <property type="term" value="C:cytosol"/>
    <property type="evidence" value="ECO:0007669"/>
    <property type="project" value="TreeGrafter"/>
</dbReference>
<dbReference type="GO" id="GO:0004455">
    <property type="term" value="F:ketol-acid reductoisomerase activity"/>
    <property type="evidence" value="ECO:0007669"/>
    <property type="project" value="UniProtKB-UniRule"/>
</dbReference>
<dbReference type="GO" id="GO:0000287">
    <property type="term" value="F:magnesium ion binding"/>
    <property type="evidence" value="ECO:0007669"/>
    <property type="project" value="UniProtKB-UniRule"/>
</dbReference>
<dbReference type="GO" id="GO:0050661">
    <property type="term" value="F:NADP binding"/>
    <property type="evidence" value="ECO:0007669"/>
    <property type="project" value="InterPro"/>
</dbReference>
<dbReference type="GO" id="GO:0009097">
    <property type="term" value="P:isoleucine biosynthetic process"/>
    <property type="evidence" value="ECO:0007669"/>
    <property type="project" value="UniProtKB-UniRule"/>
</dbReference>
<dbReference type="GO" id="GO:0009099">
    <property type="term" value="P:L-valine biosynthetic process"/>
    <property type="evidence" value="ECO:0007669"/>
    <property type="project" value="UniProtKB-UniRule"/>
</dbReference>
<dbReference type="FunFam" id="3.40.50.720:FF:000023">
    <property type="entry name" value="Ketol-acid reductoisomerase (NADP(+))"/>
    <property type="match status" value="1"/>
</dbReference>
<dbReference type="Gene3D" id="6.10.240.10">
    <property type="match status" value="1"/>
</dbReference>
<dbReference type="Gene3D" id="3.40.50.720">
    <property type="entry name" value="NAD(P)-binding Rossmann-like Domain"/>
    <property type="match status" value="1"/>
</dbReference>
<dbReference type="HAMAP" id="MF_00435">
    <property type="entry name" value="IlvC"/>
    <property type="match status" value="1"/>
</dbReference>
<dbReference type="InterPro" id="IPR008927">
    <property type="entry name" value="6-PGluconate_DH-like_C_sf"/>
</dbReference>
<dbReference type="InterPro" id="IPR013023">
    <property type="entry name" value="KARI"/>
</dbReference>
<dbReference type="InterPro" id="IPR000506">
    <property type="entry name" value="KARI_C"/>
</dbReference>
<dbReference type="InterPro" id="IPR013116">
    <property type="entry name" value="KARI_N"/>
</dbReference>
<dbReference type="InterPro" id="IPR014359">
    <property type="entry name" value="KARI_prok"/>
</dbReference>
<dbReference type="InterPro" id="IPR036291">
    <property type="entry name" value="NAD(P)-bd_dom_sf"/>
</dbReference>
<dbReference type="NCBIfam" id="TIGR00465">
    <property type="entry name" value="ilvC"/>
    <property type="match status" value="1"/>
</dbReference>
<dbReference type="NCBIfam" id="NF004017">
    <property type="entry name" value="PRK05479.1"/>
    <property type="match status" value="1"/>
</dbReference>
<dbReference type="NCBIfam" id="NF009940">
    <property type="entry name" value="PRK13403.1"/>
    <property type="match status" value="1"/>
</dbReference>
<dbReference type="PANTHER" id="PTHR21371">
    <property type="entry name" value="KETOL-ACID REDUCTOISOMERASE, MITOCHONDRIAL"/>
    <property type="match status" value="1"/>
</dbReference>
<dbReference type="PANTHER" id="PTHR21371:SF1">
    <property type="entry name" value="KETOL-ACID REDUCTOISOMERASE, MITOCHONDRIAL"/>
    <property type="match status" value="1"/>
</dbReference>
<dbReference type="Pfam" id="PF01450">
    <property type="entry name" value="KARI_C"/>
    <property type="match status" value="1"/>
</dbReference>
<dbReference type="Pfam" id="PF07991">
    <property type="entry name" value="KARI_N"/>
    <property type="match status" value="1"/>
</dbReference>
<dbReference type="PIRSF" id="PIRSF000116">
    <property type="entry name" value="IlvC_gammaproteo"/>
    <property type="match status" value="1"/>
</dbReference>
<dbReference type="SUPFAM" id="SSF48179">
    <property type="entry name" value="6-phosphogluconate dehydrogenase C-terminal domain-like"/>
    <property type="match status" value="1"/>
</dbReference>
<dbReference type="SUPFAM" id="SSF51735">
    <property type="entry name" value="NAD(P)-binding Rossmann-fold domains"/>
    <property type="match status" value="1"/>
</dbReference>
<dbReference type="PROSITE" id="PS51851">
    <property type="entry name" value="KARI_C"/>
    <property type="match status" value="1"/>
</dbReference>
<dbReference type="PROSITE" id="PS51850">
    <property type="entry name" value="KARI_N"/>
    <property type="match status" value="1"/>
</dbReference>
<feature type="chain" id="PRO_1000050563" description="Ketol-acid reductoisomerase (NADP(+))">
    <location>
        <begin position="1"/>
        <end position="338"/>
    </location>
</feature>
<feature type="domain" description="KARI N-terminal Rossmann" evidence="2">
    <location>
        <begin position="1"/>
        <end position="181"/>
    </location>
</feature>
<feature type="domain" description="KARI C-terminal knotted" evidence="3">
    <location>
        <begin position="182"/>
        <end position="327"/>
    </location>
</feature>
<feature type="active site" evidence="1">
    <location>
        <position position="107"/>
    </location>
</feature>
<feature type="binding site" evidence="1">
    <location>
        <begin position="24"/>
        <end position="27"/>
    </location>
    <ligand>
        <name>NADP(+)</name>
        <dbReference type="ChEBI" id="CHEBI:58349"/>
    </ligand>
</feature>
<feature type="binding site" evidence="1">
    <location>
        <position position="47"/>
    </location>
    <ligand>
        <name>NADP(+)</name>
        <dbReference type="ChEBI" id="CHEBI:58349"/>
    </ligand>
</feature>
<feature type="binding site" evidence="1">
    <location>
        <position position="50"/>
    </location>
    <ligand>
        <name>NADP(+)</name>
        <dbReference type="ChEBI" id="CHEBI:58349"/>
    </ligand>
</feature>
<feature type="binding site" evidence="1">
    <location>
        <position position="52"/>
    </location>
    <ligand>
        <name>NADP(+)</name>
        <dbReference type="ChEBI" id="CHEBI:58349"/>
    </ligand>
</feature>
<feature type="binding site" evidence="1">
    <location>
        <begin position="82"/>
        <end position="85"/>
    </location>
    <ligand>
        <name>NADP(+)</name>
        <dbReference type="ChEBI" id="CHEBI:58349"/>
    </ligand>
</feature>
<feature type="binding site" evidence="1">
    <location>
        <position position="133"/>
    </location>
    <ligand>
        <name>NADP(+)</name>
        <dbReference type="ChEBI" id="CHEBI:58349"/>
    </ligand>
</feature>
<feature type="binding site" evidence="1">
    <location>
        <position position="190"/>
    </location>
    <ligand>
        <name>Mg(2+)</name>
        <dbReference type="ChEBI" id="CHEBI:18420"/>
        <label>1</label>
    </ligand>
</feature>
<feature type="binding site" evidence="1">
    <location>
        <position position="190"/>
    </location>
    <ligand>
        <name>Mg(2+)</name>
        <dbReference type="ChEBI" id="CHEBI:18420"/>
        <label>2</label>
    </ligand>
</feature>
<feature type="binding site" evidence="1">
    <location>
        <position position="194"/>
    </location>
    <ligand>
        <name>Mg(2+)</name>
        <dbReference type="ChEBI" id="CHEBI:18420"/>
        <label>1</label>
    </ligand>
</feature>
<feature type="binding site" evidence="1">
    <location>
        <position position="226"/>
    </location>
    <ligand>
        <name>Mg(2+)</name>
        <dbReference type="ChEBI" id="CHEBI:18420"/>
        <label>2</label>
    </ligand>
</feature>
<feature type="binding site" evidence="1">
    <location>
        <position position="230"/>
    </location>
    <ligand>
        <name>Mg(2+)</name>
        <dbReference type="ChEBI" id="CHEBI:18420"/>
        <label>2</label>
    </ligand>
</feature>
<feature type="binding site" evidence="1">
    <location>
        <position position="251"/>
    </location>
    <ligand>
        <name>substrate</name>
    </ligand>
</feature>
<organism>
    <name type="scientific">Stutzerimonas stutzeri (strain A1501)</name>
    <name type="common">Pseudomonas stutzeri</name>
    <dbReference type="NCBI Taxonomy" id="379731"/>
    <lineage>
        <taxon>Bacteria</taxon>
        <taxon>Pseudomonadati</taxon>
        <taxon>Pseudomonadota</taxon>
        <taxon>Gammaproteobacteria</taxon>
        <taxon>Pseudomonadales</taxon>
        <taxon>Pseudomonadaceae</taxon>
        <taxon>Stutzerimonas</taxon>
    </lineage>
</organism>
<reference key="1">
    <citation type="journal article" date="2008" name="Proc. Natl. Acad. Sci. U.S.A.">
        <title>Nitrogen fixation island and rhizosphere competence traits in the genome of root-associated Pseudomonas stutzeri A1501.</title>
        <authorList>
            <person name="Yan Y."/>
            <person name="Yang J."/>
            <person name="Dou Y."/>
            <person name="Chen M."/>
            <person name="Ping S."/>
            <person name="Peng J."/>
            <person name="Lu W."/>
            <person name="Zhang W."/>
            <person name="Yao Z."/>
            <person name="Li H."/>
            <person name="Liu W."/>
            <person name="He S."/>
            <person name="Geng L."/>
            <person name="Zhang X."/>
            <person name="Yang F."/>
            <person name="Yu H."/>
            <person name="Zhan Y."/>
            <person name="Li D."/>
            <person name="Lin Z."/>
            <person name="Wang Y."/>
            <person name="Elmerich C."/>
            <person name="Lin M."/>
            <person name="Jin Q."/>
        </authorList>
    </citation>
    <scope>NUCLEOTIDE SEQUENCE [LARGE SCALE GENOMIC DNA]</scope>
    <source>
        <strain>A1501</strain>
    </source>
</reference>
<accession>A4VPI6</accession>
<proteinExistence type="inferred from homology"/>
<gene>
    <name evidence="1" type="primary">ilvC</name>
    <name type="ordered locus">PST_3256</name>
</gene>